<gene>
    <name type="primary">hemC</name>
    <name type="synonym">popE</name>
    <name type="ordered locus">b3805</name>
    <name type="ordered locus">JW5932</name>
</gene>
<protein>
    <recommendedName>
        <fullName>Porphobilinogen deaminase</fullName>
        <shortName>PBG</shortName>
        <ecNumber evidence="2">2.5.1.61</ecNumber>
    </recommendedName>
    <alternativeName>
        <fullName>Hydroxymethylbilane synthase</fullName>
        <shortName>HMBS</shortName>
    </alternativeName>
    <alternativeName>
        <fullName>Pre-uroporphyrinogen synthase</fullName>
    </alternativeName>
</protein>
<organism>
    <name type="scientific">Escherichia coli (strain K12)</name>
    <dbReference type="NCBI Taxonomy" id="83333"/>
    <lineage>
        <taxon>Bacteria</taxon>
        <taxon>Pseudomonadati</taxon>
        <taxon>Pseudomonadota</taxon>
        <taxon>Gammaproteobacteria</taxon>
        <taxon>Enterobacterales</taxon>
        <taxon>Enterobacteriaceae</taxon>
        <taxon>Escherichia</taxon>
    </lineage>
</organism>
<name>HEM3_ECOLI</name>
<reference key="1">
    <citation type="journal article" date="1986" name="Nucleic Acids Res.">
        <title>Nucleotide sequence of the hemC locus encoding porphobilinogen deaminase of Escherichia coli K12.</title>
        <authorList>
            <person name="Thomas S.D."/>
            <person name="Jordan P.M."/>
        </authorList>
    </citation>
    <scope>NUCLEOTIDE SEQUENCE [GENOMIC DNA]</scope>
    <scope>PROTEIN SEQUENCE OF 1-6</scope>
    <scope>FUNCTION</scope>
    <scope>SUBUNIT</scope>
    <source>
        <strain>K12</strain>
    </source>
</reference>
<reference key="2">
    <citation type="journal article" date="1988" name="Nucleic Acids Res.">
        <title>The sequence of hemC, hemD and two additional E. coli genes.</title>
        <authorList>
            <person name="Alefounder P.R."/>
            <person name="Abell C."/>
            <person name="Battersby A.R."/>
        </authorList>
    </citation>
    <scope>NUCLEOTIDE SEQUENCE [GENOMIC DNA]</scope>
    <source>
        <strain>K12 / CS520</strain>
    </source>
</reference>
<reference key="3">
    <citation type="journal article" date="1992" name="Science">
        <title>Analysis of the Escherichia coli genome: DNA sequence of the region from 84.5 to 86.5 minutes.</title>
        <authorList>
            <person name="Daniels D.L."/>
            <person name="Plunkett G. III"/>
            <person name="Burland V.D."/>
            <person name="Blattner F.R."/>
        </authorList>
    </citation>
    <scope>NUCLEOTIDE SEQUENCE [LARGE SCALE GENOMIC DNA]</scope>
    <source>
        <strain>K12 / MG1655 / ATCC 47076</strain>
    </source>
</reference>
<reference key="4">
    <citation type="journal article" date="1997" name="Science">
        <title>The complete genome sequence of Escherichia coli K-12.</title>
        <authorList>
            <person name="Blattner F.R."/>
            <person name="Plunkett G. III"/>
            <person name="Bloch C.A."/>
            <person name="Perna N.T."/>
            <person name="Burland V."/>
            <person name="Riley M."/>
            <person name="Collado-Vides J."/>
            <person name="Glasner J.D."/>
            <person name="Rode C.K."/>
            <person name="Mayhew G.F."/>
            <person name="Gregor J."/>
            <person name="Davis N.W."/>
            <person name="Kirkpatrick H.A."/>
            <person name="Goeden M.A."/>
            <person name="Rose D.J."/>
            <person name="Mau B."/>
            <person name="Shao Y."/>
        </authorList>
    </citation>
    <scope>NUCLEOTIDE SEQUENCE [LARGE SCALE GENOMIC DNA]</scope>
    <scope>SEQUENCE REVISION TO 137</scope>
    <source>
        <strain>K12 / MG1655 / ATCC 47076</strain>
    </source>
</reference>
<reference key="5">
    <citation type="journal article" date="2006" name="Nucleic Acids Res.">
        <title>Escherichia coli K-12: a cooperatively developed annotation snapshot -- 2005.</title>
        <authorList>
            <person name="Riley M."/>
            <person name="Abe T."/>
            <person name="Arnaud M.B."/>
            <person name="Berlyn M.K.B."/>
            <person name="Blattner F.R."/>
            <person name="Chaudhuri R.R."/>
            <person name="Glasner J.D."/>
            <person name="Horiuchi T."/>
            <person name="Keseler I.M."/>
            <person name="Kosuge T."/>
            <person name="Mori H."/>
            <person name="Perna N.T."/>
            <person name="Plunkett G. III"/>
            <person name="Rudd K.E."/>
            <person name="Serres M.H."/>
            <person name="Thomas G.H."/>
            <person name="Thomson N.R."/>
            <person name="Wishart D."/>
            <person name="Wanner B.L."/>
        </authorList>
    </citation>
    <scope>SEQUENCE REVISION TO 186 AND 265</scope>
</reference>
<reference key="6">
    <citation type="journal article" date="2006" name="Mol. Syst. Biol.">
        <title>Highly accurate genome sequences of Escherichia coli K-12 strains MG1655 and W3110.</title>
        <authorList>
            <person name="Hayashi K."/>
            <person name="Morooka N."/>
            <person name="Yamamoto Y."/>
            <person name="Fujita K."/>
            <person name="Isono K."/>
            <person name="Choi S."/>
            <person name="Ohtsubo E."/>
            <person name="Baba T."/>
            <person name="Wanner B.L."/>
            <person name="Mori H."/>
            <person name="Horiuchi T."/>
        </authorList>
    </citation>
    <scope>NUCLEOTIDE SEQUENCE [LARGE SCALE GENOMIC DNA]</scope>
    <source>
        <strain>K12 / W3110 / ATCC 27325 / DSM 5911</strain>
    </source>
</reference>
<reference key="7">
    <citation type="journal article" date="1996" name="Biochimie">
        <title>Comparative analysis of the cya locus in enterobacteria and related Gram-negative facultative anaerobes.</title>
        <authorList>
            <person name="Trotot P."/>
            <person name="Sismeiro O."/>
            <person name="Vivares C."/>
            <person name="Glaser P."/>
            <person name="Bresson-Roy A."/>
            <person name="Danchin A."/>
        </authorList>
    </citation>
    <scope>NUCLEOTIDE SEQUENCE [GENOMIC DNA] OF 1-89</scope>
    <source>
        <strain>K12</strain>
    </source>
</reference>
<reference key="8">
    <citation type="journal article" date="1988" name="Biochem. J.">
        <title>Purification, crystallization and properties of porphobilinogen deaminase from a recombinant strain of Escherichia coli K12.</title>
        <authorList>
            <person name="Jordan P.M."/>
            <person name="Thomas S.D."/>
            <person name="Warren M.J."/>
        </authorList>
    </citation>
    <scope>PROTEIN SEQUENCE OF 1-10</scope>
    <scope>CATALYTIC ACTIVITY</scope>
</reference>
<reference key="9">
    <citation type="journal article" date="1988" name="Biochem. J.">
        <title>Evidence that the pyrromethane cofactor of hydroxymethylbilane synthase (porphobilinogen deaminase) is bound to the protein through the sulphur atom of cysteine-242.</title>
        <authorList>
            <person name="Miller A.D."/>
            <person name="Hart G.J."/>
            <person name="Packman L.C."/>
            <person name="Battersby A.R."/>
        </authorList>
    </citation>
    <scope>PROSTHETIC GROUP AT CYS-242</scope>
</reference>
<reference key="10">
    <citation type="journal article" date="1989" name="Biochem. J.">
        <title>Evidence that pyridoxal phosphate modification of lysine residues (Lys-55 and Lys-59) causes inactivation of hydroxymethylbilane synthase (porphobilinogen deaminase).</title>
        <authorList>
            <person name="Miller A.D."/>
            <person name="Packman L.C."/>
            <person name="Hart G.J."/>
            <person name="Alefounder P.R."/>
            <person name="Abell C."/>
            <person name="Battersby A.R."/>
        </authorList>
    </citation>
    <scope>INACTIVATION BY PYRIDOXAL 5'-PHOSPHATE</scope>
</reference>
<reference key="11">
    <citation type="journal article" date="1990" name="Biochem. J.">
        <title>Investigation of putative active-site lysine residues in hydroxymethylbilane synthase. Preparation and characterization of mutants in which (a) Lys-55, (b) Lys-59 and (c) both Lys-55 and Lys-59 have been replaced by glutamine.</title>
        <authorList>
            <person name="Hadener A."/>
            <person name="Alefounder P.R."/>
            <person name="Hart G.J."/>
            <person name="Abell C."/>
            <person name="Battersby A.R."/>
        </authorList>
    </citation>
    <scope>MUTAGENESIS OF LYS-55 AND LYS-59</scope>
</reference>
<reference key="12">
    <citation type="journal article" date="1991" name="Biochem. J.">
        <title>Studies on the mechanism of hydroxymethylbilane synthase concerning the role of arginine residues in substrate binding.</title>
        <authorList>
            <person name="Lander M."/>
            <person name="Pitt A.R."/>
            <person name="Alefounder P.R."/>
            <person name="Bardy D."/>
            <person name="Abell C."/>
            <person name="Battersby A.R."/>
        </authorList>
    </citation>
    <scope>MUTAGENESIS OF ARGININE RESIDUES</scope>
</reference>
<reference key="13">
    <citation type="journal article" date="1991" name="Biochem. J.">
        <title>Mutagenesis of arginine residues in the catalytic cleft of Escherichia coli porphobilinogen deaminase that affects dipyrromethane cofactor assembly and tetrapyrrole chain initiation and elongation.</title>
        <authorList>
            <person name="Jordan P.M."/>
            <person name="Woodcock S.C."/>
        </authorList>
    </citation>
    <scope>MUTAGENESIS OF ARGININE RESIDUES</scope>
</reference>
<reference key="14">
    <citation type="journal article" date="1992" name="Nature">
        <title>Structure of porphobilinogen deaminase reveals a flexible multidomain polymerase with a single catalytic site.</title>
        <authorList>
            <person name="Louie G.V."/>
            <person name="Brownlie P.D."/>
            <person name="Labert R."/>
            <person name="Cooper J.B."/>
            <person name="Blundell T.L."/>
            <person name="Wood S.P."/>
            <person name="Warren M.J."/>
            <person name="Woodcock S.C."/>
            <person name="Jordan P.M."/>
        </authorList>
    </citation>
    <scope>X-RAY CRYSTALLOGRAPHY (1.9 ANGSTROMS)</scope>
    <scope>PROSTHETIC GROUP AT CYS-242</scope>
</reference>
<comment type="function">
    <text evidence="3">Tetrapolymerization of the monopyrrole PBG into the hydroxymethylbilane pre-uroporphyrinogen in several discrete steps.</text>
</comment>
<comment type="catalytic activity">
    <reaction evidence="2">
        <text>4 porphobilinogen + H2O = hydroxymethylbilane + 4 NH4(+)</text>
        <dbReference type="Rhea" id="RHEA:13185"/>
        <dbReference type="ChEBI" id="CHEBI:15377"/>
        <dbReference type="ChEBI" id="CHEBI:28938"/>
        <dbReference type="ChEBI" id="CHEBI:57845"/>
        <dbReference type="ChEBI" id="CHEBI:58126"/>
        <dbReference type="EC" id="2.5.1.61"/>
    </reaction>
</comment>
<comment type="cofactor">
    <cofactor>
        <name>dipyrromethane</name>
        <dbReference type="ChEBI" id="CHEBI:60342"/>
    </cofactor>
    <text>Binds 1 dipyrromethane group covalently.</text>
</comment>
<comment type="pathway">
    <text evidence="5">Porphyrin-containing compound metabolism; protoporphyrin-IX biosynthesis; coproporphyrinogen-III from 5-aminolevulinate: step 2/4.</text>
</comment>
<comment type="subunit">
    <text evidence="3">Monomer.</text>
</comment>
<comment type="miscellaneous">
    <text>Arginine residues that are closely associated with one another might be involved in substrate binding.</text>
</comment>
<comment type="miscellaneous">
    <text>The porphobilinogen subunits are added to the dipyrromethane group.</text>
</comment>
<comment type="similarity">
    <text evidence="4">Belongs to the HMBS family.</text>
</comment>
<comment type="sequence caution" evidence="4">
    <conflict type="erroneous initiation">
        <sequence resource="EMBL-CDS" id="AAA67601"/>
    </conflict>
</comment>
<proteinExistence type="evidence at protein level"/>
<keyword id="KW-0002">3D-structure</keyword>
<keyword id="KW-0903">Direct protein sequencing</keyword>
<keyword id="KW-0627">Porphyrin biosynthesis</keyword>
<keyword id="KW-1185">Reference proteome</keyword>
<keyword id="KW-0808">Transferase</keyword>
<dbReference type="EC" id="2.5.1.61" evidence="2"/>
<dbReference type="EMBL" id="X04242">
    <property type="protein sequence ID" value="CAA27813.1"/>
    <property type="molecule type" value="Genomic_DNA"/>
</dbReference>
<dbReference type="EMBL" id="X12614">
    <property type="protein sequence ID" value="CAA31132.1"/>
    <property type="molecule type" value="Genomic_DNA"/>
</dbReference>
<dbReference type="EMBL" id="M87049">
    <property type="protein sequence ID" value="AAA67601.1"/>
    <property type="status" value="ALT_INIT"/>
    <property type="molecule type" value="Genomic_DNA"/>
</dbReference>
<dbReference type="EMBL" id="U00096">
    <property type="protein sequence ID" value="AAT48218.1"/>
    <property type="molecule type" value="Genomic_DNA"/>
</dbReference>
<dbReference type="EMBL" id="AP009048">
    <property type="protein sequence ID" value="BAE77496.1"/>
    <property type="molecule type" value="Genomic_DNA"/>
</dbReference>
<dbReference type="EMBL" id="X66782">
    <property type="protein sequence ID" value="CAA47279.1"/>
    <property type="molecule type" value="Genomic_DNA"/>
</dbReference>
<dbReference type="PIR" id="F65184">
    <property type="entry name" value="IBEC"/>
</dbReference>
<dbReference type="RefSeq" id="WP_001338644.1">
    <property type="nucleotide sequence ID" value="NZ_SSZK01000025.1"/>
</dbReference>
<dbReference type="RefSeq" id="YP_026260.1">
    <property type="nucleotide sequence ID" value="NC_000913.3"/>
</dbReference>
<dbReference type="PDB" id="1AH5">
    <property type="method" value="X-ray"/>
    <property type="resolution" value="2.40 A"/>
    <property type="chains" value="A=1-313"/>
</dbReference>
<dbReference type="PDB" id="1GTK">
    <property type="method" value="X-ray"/>
    <property type="resolution" value="1.66 A"/>
    <property type="chains" value="A=1-313"/>
</dbReference>
<dbReference type="PDB" id="1PDA">
    <property type="method" value="X-ray"/>
    <property type="resolution" value="1.76 A"/>
    <property type="chains" value="A=1-313"/>
</dbReference>
<dbReference type="PDB" id="1YPN">
    <property type="method" value="X-ray"/>
    <property type="resolution" value="2.30 A"/>
    <property type="chains" value="A=1-313"/>
</dbReference>
<dbReference type="PDB" id="2YPN">
    <property type="method" value="X-ray"/>
    <property type="resolution" value="2.30 A"/>
    <property type="chains" value="A=1-313"/>
</dbReference>
<dbReference type="PDBsum" id="1AH5"/>
<dbReference type="PDBsum" id="1GTK"/>
<dbReference type="PDBsum" id="1PDA"/>
<dbReference type="PDBsum" id="1YPN"/>
<dbReference type="PDBsum" id="2YPN"/>
<dbReference type="SMR" id="P06983"/>
<dbReference type="BioGRID" id="4259657">
    <property type="interactions" value="18"/>
</dbReference>
<dbReference type="DIP" id="DIP-9879N"/>
<dbReference type="FunCoup" id="P06983">
    <property type="interactions" value="823"/>
</dbReference>
<dbReference type="IntAct" id="P06983">
    <property type="interactions" value="1"/>
</dbReference>
<dbReference type="STRING" id="511145.b3805"/>
<dbReference type="DrugBank" id="DB04517">
    <property type="generic name" value="Dipyrromethane Cofactor"/>
</dbReference>
<dbReference type="jPOST" id="P06983"/>
<dbReference type="PaxDb" id="511145-b3805"/>
<dbReference type="EnsemblBacteria" id="AAT48218">
    <property type="protein sequence ID" value="AAT48218"/>
    <property type="gene ID" value="b3805"/>
</dbReference>
<dbReference type="GeneID" id="947759"/>
<dbReference type="KEGG" id="ecj:JW5932"/>
<dbReference type="KEGG" id="eco:b3805"/>
<dbReference type="KEGG" id="ecoc:C3026_20600"/>
<dbReference type="PATRIC" id="fig|511145.12.peg.3920"/>
<dbReference type="EchoBASE" id="EB0424"/>
<dbReference type="eggNOG" id="COG0181">
    <property type="taxonomic scope" value="Bacteria"/>
</dbReference>
<dbReference type="HOGENOM" id="CLU_019704_0_2_6"/>
<dbReference type="InParanoid" id="P06983"/>
<dbReference type="OMA" id="LWQANHI"/>
<dbReference type="OrthoDB" id="9810298at2"/>
<dbReference type="PhylomeDB" id="P06983"/>
<dbReference type="BioCyc" id="EcoCyc:OHMETHYLBILANESYN-MONOMER"/>
<dbReference type="BioCyc" id="MetaCyc:OHMETHYLBILANESYN-MONOMER"/>
<dbReference type="BRENDA" id="2.5.1.61">
    <property type="organism ID" value="2026"/>
</dbReference>
<dbReference type="SABIO-RK" id="P06983"/>
<dbReference type="UniPathway" id="UPA00251">
    <property type="reaction ID" value="UER00319"/>
</dbReference>
<dbReference type="EvolutionaryTrace" id="P06983"/>
<dbReference type="PRO" id="PR:P06983"/>
<dbReference type="Proteomes" id="UP000000625">
    <property type="component" value="Chromosome"/>
</dbReference>
<dbReference type="GO" id="GO:0005737">
    <property type="term" value="C:cytoplasm"/>
    <property type="evidence" value="ECO:0000314"/>
    <property type="project" value="EcoliWiki"/>
</dbReference>
<dbReference type="GO" id="GO:0005829">
    <property type="term" value="C:cytosol"/>
    <property type="evidence" value="ECO:0000314"/>
    <property type="project" value="EcoCyc"/>
</dbReference>
<dbReference type="GO" id="GO:0004418">
    <property type="term" value="F:hydroxymethylbilane synthase activity"/>
    <property type="evidence" value="ECO:0000314"/>
    <property type="project" value="EcoCyc"/>
</dbReference>
<dbReference type="GO" id="GO:0006783">
    <property type="term" value="P:heme biosynthetic process"/>
    <property type="evidence" value="ECO:0000315"/>
    <property type="project" value="EcoliWiki"/>
</dbReference>
<dbReference type="GO" id="GO:0006782">
    <property type="term" value="P:protoporphyrinogen IX biosynthetic process"/>
    <property type="evidence" value="ECO:0000314"/>
    <property type="project" value="EcoCyc"/>
</dbReference>
<dbReference type="GO" id="GO:0033014">
    <property type="term" value="P:tetrapyrrole biosynthetic process"/>
    <property type="evidence" value="ECO:0000315"/>
    <property type="project" value="EcoliWiki"/>
</dbReference>
<dbReference type="CDD" id="cd13646">
    <property type="entry name" value="PBP2_EcHMBS_like"/>
    <property type="match status" value="1"/>
</dbReference>
<dbReference type="FunFam" id="3.30.160.40:FF:000002">
    <property type="entry name" value="Porphobilinogen deaminase"/>
    <property type="match status" value="1"/>
</dbReference>
<dbReference type="FunFam" id="3.40.190.10:FF:000004">
    <property type="entry name" value="Porphobilinogen deaminase"/>
    <property type="match status" value="1"/>
</dbReference>
<dbReference type="FunFam" id="3.40.190.10:FF:000005">
    <property type="entry name" value="Porphobilinogen deaminase"/>
    <property type="match status" value="1"/>
</dbReference>
<dbReference type="Gene3D" id="3.40.190.10">
    <property type="entry name" value="Periplasmic binding protein-like II"/>
    <property type="match status" value="2"/>
</dbReference>
<dbReference type="Gene3D" id="3.30.160.40">
    <property type="entry name" value="Porphobilinogen deaminase, C-terminal domain"/>
    <property type="match status" value="1"/>
</dbReference>
<dbReference type="HAMAP" id="MF_00260">
    <property type="entry name" value="Porphobil_deam"/>
    <property type="match status" value="1"/>
</dbReference>
<dbReference type="InterPro" id="IPR000860">
    <property type="entry name" value="HemC"/>
</dbReference>
<dbReference type="InterPro" id="IPR022419">
    <property type="entry name" value="Porphobilin_deaminase_cofac_BS"/>
</dbReference>
<dbReference type="InterPro" id="IPR022417">
    <property type="entry name" value="Porphobilin_deaminase_N"/>
</dbReference>
<dbReference type="InterPro" id="IPR022418">
    <property type="entry name" value="Porphobilinogen_deaminase_C"/>
</dbReference>
<dbReference type="InterPro" id="IPR036803">
    <property type="entry name" value="Porphobilinogen_deaminase_C_sf"/>
</dbReference>
<dbReference type="NCBIfam" id="TIGR00212">
    <property type="entry name" value="hemC"/>
    <property type="match status" value="1"/>
</dbReference>
<dbReference type="PANTHER" id="PTHR11557">
    <property type="entry name" value="PORPHOBILINOGEN DEAMINASE"/>
    <property type="match status" value="1"/>
</dbReference>
<dbReference type="PANTHER" id="PTHR11557:SF0">
    <property type="entry name" value="PORPHOBILINOGEN DEAMINASE"/>
    <property type="match status" value="1"/>
</dbReference>
<dbReference type="Pfam" id="PF01379">
    <property type="entry name" value="Porphobil_deam"/>
    <property type="match status" value="1"/>
</dbReference>
<dbReference type="Pfam" id="PF03900">
    <property type="entry name" value="Porphobil_deamC"/>
    <property type="match status" value="1"/>
</dbReference>
<dbReference type="PIRSF" id="PIRSF001438">
    <property type="entry name" value="4pyrrol_synth_OHMeBilane_synth"/>
    <property type="match status" value="1"/>
</dbReference>
<dbReference type="PRINTS" id="PR00151">
    <property type="entry name" value="PORPHBDMNASE"/>
</dbReference>
<dbReference type="SUPFAM" id="SSF53850">
    <property type="entry name" value="Periplasmic binding protein-like II"/>
    <property type="match status" value="1"/>
</dbReference>
<dbReference type="SUPFAM" id="SSF54782">
    <property type="entry name" value="Porphobilinogen deaminase (hydroxymethylbilane synthase), C-terminal domain"/>
    <property type="match status" value="1"/>
</dbReference>
<dbReference type="PROSITE" id="PS00533">
    <property type="entry name" value="PORPHOBILINOGEN_DEAM"/>
    <property type="match status" value="1"/>
</dbReference>
<evidence type="ECO:0000269" key="1">
    <source>
    </source>
</evidence>
<evidence type="ECO:0000269" key="2">
    <source>
    </source>
</evidence>
<evidence type="ECO:0000269" key="3">
    <source>
    </source>
</evidence>
<evidence type="ECO:0000305" key="4"/>
<evidence type="ECO:0000305" key="5">
    <source>
    </source>
</evidence>
<evidence type="ECO:0007829" key="6">
    <source>
        <dbReference type="PDB" id="1GTK"/>
    </source>
</evidence>
<evidence type="ECO:0007829" key="7">
    <source>
        <dbReference type="PDB" id="1PDA"/>
    </source>
</evidence>
<evidence type="ECO:0007829" key="8">
    <source>
        <dbReference type="PDB" id="2YPN"/>
    </source>
</evidence>
<feature type="chain" id="PRO_0000142934" description="Porphobilinogen deaminase">
    <location>
        <begin position="1"/>
        <end position="313"/>
    </location>
</feature>
<feature type="modified residue" description="S-(dipyrrolylmethanemethyl)cysteine">
    <location>
        <position position="242"/>
    </location>
</feature>
<feature type="mutagenesis site" description="No loss of activity.">
    <original>R</original>
    <variation>L</variation>
    <location>
        <position position="7"/>
    </location>
</feature>
<feature type="mutagenesis site" description="Loss of activity.">
    <original>R</original>
    <variation>L</variation>
    <location>
        <position position="11"/>
    </location>
</feature>
<feature type="mutagenesis site" description="No loss of activity." evidence="1">
    <original>K</original>
    <variation>Q</variation>
    <location>
        <position position="55"/>
    </location>
</feature>
<feature type="mutagenesis site" description="25-fold decrease in activity." evidence="1">
    <original>K</original>
    <variation>Q</variation>
    <location>
        <position position="59"/>
    </location>
</feature>
<feature type="mutagenesis site" description="No loss of activity.">
    <original>R</original>
    <variation>L</variation>
    <location>
        <position position="101"/>
    </location>
</feature>
<feature type="mutagenesis site" description="Complete loss of activity.">
    <original>R</original>
    <variation>L</variation>
    <location>
        <position position="131"/>
    </location>
</feature>
<feature type="mutagenesis site" description="Complete loss of activity.">
    <original>R</original>
    <variation>L</variation>
    <location>
        <position position="132"/>
    </location>
</feature>
<feature type="mutagenesis site" description="Loss of activity.">
    <original>R</original>
    <variation>L</variation>
    <location>
        <position position="155"/>
    </location>
</feature>
<feature type="mutagenesis site" description="Loss of activity.">
    <original>R</original>
    <variation>L</variation>
    <location>
        <position position="176"/>
    </location>
</feature>
<feature type="sequence conflict" description="In Ref. 3; AAA67601." evidence="4" ref="3">
    <original>A</original>
    <variation>G</variation>
    <location>
        <position position="137"/>
    </location>
</feature>
<feature type="sequence conflict" description="In Ref. 3; AAA67601." evidence="4" ref="3">
    <original>A</original>
    <variation>G</variation>
    <location>
        <position position="186"/>
    </location>
</feature>
<feature type="sequence conflict" description="In Ref. 1; CAA27813." evidence="4" ref="1">
    <original>G</original>
    <variation>A</variation>
    <location>
        <position position="241"/>
    </location>
</feature>
<feature type="sequence conflict" description="In Ref. 1; CAA27813." evidence="4" ref="1">
    <original>A</original>
    <variation>G</variation>
    <location>
        <position position="261"/>
    </location>
</feature>
<feature type="sequence conflict" description="In Ref. 3; AAA67601." evidence="4" ref="3">
    <original>A</original>
    <variation>R</variation>
    <location>
        <position position="265"/>
    </location>
</feature>
<feature type="strand" evidence="6">
    <location>
        <begin position="5"/>
        <end position="10"/>
    </location>
</feature>
<feature type="helix" evidence="6">
    <location>
        <begin position="14"/>
        <end position="30"/>
    </location>
</feature>
<feature type="strand" evidence="6">
    <location>
        <begin position="35"/>
        <end position="40"/>
    </location>
</feature>
<feature type="helix" evidence="7">
    <location>
        <begin position="44"/>
        <end position="47"/>
    </location>
</feature>
<feature type="helix" evidence="6">
    <location>
        <begin position="63"/>
        <end position="71"/>
    </location>
</feature>
<feature type="strand" evidence="6">
    <location>
        <begin position="76"/>
        <end position="81"/>
    </location>
</feature>
<feature type="helix" evidence="6">
    <location>
        <begin position="82"/>
        <end position="84"/>
    </location>
</feature>
<feature type="strand" evidence="6">
    <location>
        <begin position="93"/>
        <end position="98"/>
    </location>
</feature>
<feature type="strand" evidence="6">
    <location>
        <begin position="106"/>
        <end position="109"/>
    </location>
</feature>
<feature type="helix" evidence="6">
    <location>
        <begin position="116"/>
        <end position="118"/>
    </location>
</feature>
<feature type="strand" evidence="6">
    <location>
        <begin position="124"/>
        <end position="126"/>
    </location>
</feature>
<feature type="helix" evidence="6">
    <location>
        <begin position="130"/>
        <end position="139"/>
    </location>
</feature>
<feature type="strand" evidence="6">
    <location>
        <begin position="143"/>
        <end position="146"/>
    </location>
</feature>
<feature type="helix" evidence="6">
    <location>
        <begin position="152"/>
        <end position="160"/>
    </location>
</feature>
<feature type="strand" evidence="6">
    <location>
        <begin position="165"/>
        <end position="170"/>
    </location>
</feature>
<feature type="helix" evidence="6">
    <location>
        <begin position="171"/>
        <end position="176"/>
    </location>
</feature>
<feature type="helix" evidence="6">
    <location>
        <begin position="180"/>
        <end position="182"/>
    </location>
</feature>
<feature type="strand" evidence="6">
    <location>
        <begin position="184"/>
        <end position="186"/>
    </location>
</feature>
<feature type="turn" evidence="6">
    <location>
        <begin position="189"/>
        <end position="191"/>
    </location>
</feature>
<feature type="turn" evidence="6">
    <location>
        <begin position="196"/>
        <end position="199"/>
    </location>
</feature>
<feature type="strand" evidence="6">
    <location>
        <begin position="201"/>
        <end position="206"/>
    </location>
</feature>
<feature type="helix" evidence="6">
    <location>
        <begin position="210"/>
        <end position="216"/>
    </location>
</feature>
<feature type="helix" evidence="6">
    <location>
        <begin position="217"/>
        <end position="219"/>
    </location>
</feature>
<feature type="helix" evidence="6">
    <location>
        <begin position="222"/>
        <end position="238"/>
    </location>
</feature>
<feature type="strand" evidence="8">
    <location>
        <begin position="242"/>
        <end position="244"/>
    </location>
</feature>
<feature type="strand" evidence="6">
    <location>
        <begin position="246"/>
        <end position="253"/>
    </location>
</feature>
<feature type="strand" evidence="6">
    <location>
        <begin position="256"/>
        <end position="264"/>
    </location>
</feature>
<feature type="strand" evidence="6">
    <location>
        <begin position="271"/>
        <end position="278"/>
    </location>
</feature>
<feature type="helix" evidence="6">
    <location>
        <begin position="280"/>
        <end position="282"/>
    </location>
</feature>
<feature type="helix" evidence="6">
    <location>
        <begin position="283"/>
        <end position="296"/>
    </location>
</feature>
<feature type="helix" evidence="6">
    <location>
        <begin position="299"/>
        <end position="304"/>
    </location>
</feature>
<feature type="turn" evidence="6">
    <location>
        <begin position="305"/>
        <end position="308"/>
    </location>
</feature>
<accession>P06983</accession>
<accession>P78125</accession>
<accession>Q2M8B0</accession>
<sequence>MLDNVLRIATRQSPLALWQAHYVKDKLMASHPGLVVELVPMVTRGDVILDTPLAKVGGKGLFVKELEVALLENRADIAVHSMKDVPVEFPQGLGLVTICEREDPRDAFVSNNYDSLDALPAGSIVGTSSLRRQCQLAERRPDLIIRSLRGNVGTRLSKLDNGEYDAIILAVAGLKRLGLESRIRAALPPEISLPAVGQGAVGIECRLDDSRTRELLAALNHHETALRVTAERAMNTRLEGGCQVPIGSYAELIDGEIWLRALVGAPDGSQIIRGERRGAPQDAEQMGISLAEELLNNGAREILAEVYNGDAPA</sequence>